<proteinExistence type="inferred from homology"/>
<gene>
    <name type="primary">SLD7</name>
    <name type="ORF">C1Q_05096</name>
</gene>
<evidence type="ECO:0000250" key="1"/>
<evidence type="ECO:0000305" key="2"/>
<feature type="chain" id="PRO_0000411030" description="Mitochondrial morphogenesis protein SLD7">
    <location>
        <begin position="1"/>
        <end position="257"/>
    </location>
</feature>
<comment type="function">
    <text evidence="1">Required for the proper function of SLD3 at the initiation of DNA replication. Binds to SLD3 and reduces its affinity for CDC45, a component of the replication fork. Required for mitochondrial morphology (By similarity).</text>
</comment>
<comment type="subunit">
    <text evidence="1">Interacts with SLD3.</text>
</comment>
<comment type="subcellular location">
    <subcellularLocation>
        <location evidence="1">Nucleus</location>
    </subcellularLocation>
    <subcellularLocation>
        <location evidence="1">Cytoplasm</location>
        <location evidence="1">Cytoskeleton</location>
        <location evidence="1">Spindle pole</location>
    </subcellularLocation>
</comment>
<comment type="similarity">
    <text evidence="2">Belongs to the SLD7 family.</text>
</comment>
<protein>
    <recommendedName>
        <fullName>Mitochondrial morphogenesis protein SLD7</fullName>
    </recommendedName>
    <alternativeName>
        <fullName>Synthetic lethality with DPB11-24 mutation protein 7</fullName>
    </alternativeName>
</protein>
<name>SLD7_YEAS2</name>
<organism>
    <name type="scientific">Saccharomyces cerevisiae (strain JAY291)</name>
    <name type="common">Baker's yeast</name>
    <dbReference type="NCBI Taxonomy" id="574961"/>
    <lineage>
        <taxon>Eukaryota</taxon>
        <taxon>Fungi</taxon>
        <taxon>Dikarya</taxon>
        <taxon>Ascomycota</taxon>
        <taxon>Saccharomycotina</taxon>
        <taxon>Saccharomycetes</taxon>
        <taxon>Saccharomycetales</taxon>
        <taxon>Saccharomycetaceae</taxon>
        <taxon>Saccharomyces</taxon>
    </lineage>
</organism>
<accession>C7GX58</accession>
<reference key="1">
    <citation type="journal article" date="2009" name="Genome Res.">
        <title>Genome structure of a Saccharomyces cerevisiae strain widely used in bioethanol production.</title>
        <authorList>
            <person name="Argueso J.L."/>
            <person name="Carazzolle M.F."/>
            <person name="Mieczkowski P.A."/>
            <person name="Duarte F.M."/>
            <person name="Netto O.V.C."/>
            <person name="Missawa S.K."/>
            <person name="Galzerani F."/>
            <person name="Costa G.G.L."/>
            <person name="Vidal R.O."/>
            <person name="Noronha M.F."/>
            <person name="Dominska M."/>
            <person name="Andrietta M.G.S."/>
            <person name="Andrietta S.R."/>
            <person name="Cunha A.F."/>
            <person name="Gomes L.H."/>
            <person name="Tavares F.C.A."/>
            <person name="Alcarde A.R."/>
            <person name="Dietrich F.S."/>
            <person name="McCusker J.H."/>
            <person name="Petes T.D."/>
            <person name="Pereira G.A.G."/>
        </authorList>
    </citation>
    <scope>NUCLEOTIDE SEQUENCE [LARGE SCALE GENOMIC DNA]</scope>
    <source>
        <strain>JAY291</strain>
    </source>
</reference>
<dbReference type="EMBL" id="ACFL01000407">
    <property type="protein sequence ID" value="EEU04616.1"/>
    <property type="molecule type" value="Genomic_DNA"/>
</dbReference>
<dbReference type="SMR" id="C7GX58"/>
<dbReference type="Proteomes" id="UP000008073">
    <property type="component" value="Unassembled WGS sequence"/>
</dbReference>
<dbReference type="GO" id="GO:0005737">
    <property type="term" value="C:cytoplasm"/>
    <property type="evidence" value="ECO:0007669"/>
    <property type="project" value="UniProtKB-KW"/>
</dbReference>
<dbReference type="GO" id="GO:0005634">
    <property type="term" value="C:nucleus"/>
    <property type="evidence" value="ECO:0007669"/>
    <property type="project" value="UniProtKB-SubCell"/>
</dbReference>
<dbReference type="GO" id="GO:0000922">
    <property type="term" value="C:spindle pole"/>
    <property type="evidence" value="ECO:0007669"/>
    <property type="project" value="UniProtKB-SubCell"/>
</dbReference>
<dbReference type="GO" id="GO:0006260">
    <property type="term" value="P:DNA replication"/>
    <property type="evidence" value="ECO:0007669"/>
    <property type="project" value="UniProtKB-KW"/>
</dbReference>
<dbReference type="GO" id="GO:0030174">
    <property type="term" value="P:regulation of DNA-templated DNA replication initiation"/>
    <property type="evidence" value="ECO:0007669"/>
    <property type="project" value="InterPro"/>
</dbReference>
<dbReference type="InterPro" id="IPR016808">
    <property type="entry name" value="Sld7"/>
</dbReference>
<dbReference type="InterPro" id="IPR041260">
    <property type="entry name" value="Sld7_C"/>
</dbReference>
<dbReference type="InterPro" id="IPR041564">
    <property type="entry name" value="Sld7_N"/>
</dbReference>
<dbReference type="Pfam" id="PF18596">
    <property type="entry name" value="Sld7_C"/>
    <property type="match status" value="1"/>
</dbReference>
<dbReference type="Pfam" id="PF18636">
    <property type="entry name" value="Sld7_N"/>
    <property type="match status" value="1"/>
</dbReference>
<dbReference type="PIRSF" id="PIRSF022788">
    <property type="entry name" value="UCP022788"/>
    <property type="match status" value="1"/>
</dbReference>
<sequence>MSRKLCTLNFTLSGKQGSLVIRDIQLWSNRPTASKSTSELRGQFIQYVDLAKLPLWVRSTNMNTYRCYSTSATAQAYFKSKLRNANRGIVIELFDKVDQRSQEPAYLIIFRENTELNCFQVDLTMKHEFDGQVTKLKQEIGKTRASVSKEGSIDIIIQQSQQRKIGTKTKVYRNVHINDKRLQFNETLSKLILGGLRLRGISNSITDYQKLYKITFDAAEFTHRDELKRISMGSGEEVSFESLQETVETLLKLFTKS</sequence>
<keyword id="KW-0131">Cell cycle</keyword>
<keyword id="KW-0963">Cytoplasm</keyword>
<keyword id="KW-0206">Cytoskeleton</keyword>
<keyword id="KW-0235">DNA replication</keyword>
<keyword id="KW-0539">Nucleus</keyword>